<accession>Q8PQV0</accession>
<sequence length="170" mass="18072">MSDEILNGAAAPADAAAGPAFTIEKIYVKDVSFESPNAPAVFNDANQPELQLNLNQKVQRLNDNAFEVVLAVTLTCTAGGKTAYVAEVQQAGVFGLVGLDPQAIDVLLGTQCPNILFPYVRTLVSDLIQAGGFPPFYLQPINFEALYAETLRQRQNEGTSLADSEPAGNA</sequence>
<name>SECB_XANAC</name>
<protein>
    <recommendedName>
        <fullName evidence="1">Protein-export protein SecB</fullName>
    </recommendedName>
</protein>
<comment type="function">
    <text evidence="1">One of the proteins required for the normal export of preproteins out of the cell cytoplasm. It is a molecular chaperone that binds to a subset of precursor proteins, maintaining them in a translocation-competent state. It also specifically binds to its receptor SecA.</text>
</comment>
<comment type="subunit">
    <text evidence="1">Homotetramer, a dimer of dimers. One homotetramer interacts with 1 SecA dimer.</text>
</comment>
<comment type="subcellular location">
    <subcellularLocation>
        <location evidence="1">Cytoplasm</location>
    </subcellularLocation>
</comment>
<comment type="similarity">
    <text evidence="1">Belongs to the SecB family.</text>
</comment>
<dbReference type="EMBL" id="AE008923">
    <property type="protein sequence ID" value="AAM35113.1"/>
    <property type="molecule type" value="Genomic_DNA"/>
</dbReference>
<dbReference type="RefSeq" id="WP_003488515.1">
    <property type="nucleotide sequence ID" value="NC_003919.1"/>
</dbReference>
<dbReference type="SMR" id="Q8PQV0"/>
<dbReference type="GeneID" id="97508599"/>
<dbReference type="KEGG" id="xac:XAC0221"/>
<dbReference type="eggNOG" id="COG1952">
    <property type="taxonomic scope" value="Bacteria"/>
</dbReference>
<dbReference type="HOGENOM" id="CLU_111574_1_0_6"/>
<dbReference type="Proteomes" id="UP000000576">
    <property type="component" value="Chromosome"/>
</dbReference>
<dbReference type="GO" id="GO:0005737">
    <property type="term" value="C:cytoplasm"/>
    <property type="evidence" value="ECO:0007669"/>
    <property type="project" value="UniProtKB-SubCell"/>
</dbReference>
<dbReference type="GO" id="GO:0051082">
    <property type="term" value="F:unfolded protein binding"/>
    <property type="evidence" value="ECO:0007669"/>
    <property type="project" value="InterPro"/>
</dbReference>
<dbReference type="GO" id="GO:0006457">
    <property type="term" value="P:protein folding"/>
    <property type="evidence" value="ECO:0007669"/>
    <property type="project" value="UniProtKB-UniRule"/>
</dbReference>
<dbReference type="GO" id="GO:0051262">
    <property type="term" value="P:protein tetramerization"/>
    <property type="evidence" value="ECO:0007669"/>
    <property type="project" value="InterPro"/>
</dbReference>
<dbReference type="GO" id="GO:0015031">
    <property type="term" value="P:protein transport"/>
    <property type="evidence" value="ECO:0007669"/>
    <property type="project" value="UniProtKB-UniRule"/>
</dbReference>
<dbReference type="Gene3D" id="3.10.420.10">
    <property type="entry name" value="SecB-like"/>
    <property type="match status" value="1"/>
</dbReference>
<dbReference type="HAMAP" id="MF_00821">
    <property type="entry name" value="SecB"/>
    <property type="match status" value="1"/>
</dbReference>
<dbReference type="InterPro" id="IPR003708">
    <property type="entry name" value="SecB"/>
</dbReference>
<dbReference type="InterPro" id="IPR035958">
    <property type="entry name" value="SecB-like_sf"/>
</dbReference>
<dbReference type="NCBIfam" id="NF004391">
    <property type="entry name" value="PRK05751.1-2"/>
    <property type="match status" value="1"/>
</dbReference>
<dbReference type="NCBIfam" id="NF004393">
    <property type="entry name" value="PRK05751.1-4"/>
    <property type="match status" value="1"/>
</dbReference>
<dbReference type="NCBIfam" id="TIGR00809">
    <property type="entry name" value="secB"/>
    <property type="match status" value="1"/>
</dbReference>
<dbReference type="PANTHER" id="PTHR36918">
    <property type="match status" value="1"/>
</dbReference>
<dbReference type="PANTHER" id="PTHR36918:SF1">
    <property type="entry name" value="PROTEIN-EXPORT PROTEIN SECB"/>
    <property type="match status" value="1"/>
</dbReference>
<dbReference type="Pfam" id="PF02556">
    <property type="entry name" value="SecB"/>
    <property type="match status" value="1"/>
</dbReference>
<dbReference type="PRINTS" id="PR01594">
    <property type="entry name" value="SECBCHAPRONE"/>
</dbReference>
<dbReference type="SUPFAM" id="SSF54611">
    <property type="entry name" value="SecB-like"/>
    <property type="match status" value="1"/>
</dbReference>
<feature type="chain" id="PRO_0000055427" description="Protein-export protein SecB">
    <location>
        <begin position="1"/>
        <end position="170"/>
    </location>
</feature>
<proteinExistence type="inferred from homology"/>
<evidence type="ECO:0000255" key="1">
    <source>
        <dbReference type="HAMAP-Rule" id="MF_00821"/>
    </source>
</evidence>
<gene>
    <name evidence="1" type="primary">secB</name>
    <name type="ordered locus">XAC0221</name>
</gene>
<reference key="1">
    <citation type="journal article" date="2002" name="Nature">
        <title>Comparison of the genomes of two Xanthomonas pathogens with differing host specificities.</title>
        <authorList>
            <person name="da Silva A.C.R."/>
            <person name="Ferro J.A."/>
            <person name="Reinach F.C."/>
            <person name="Farah C.S."/>
            <person name="Furlan L.R."/>
            <person name="Quaggio R.B."/>
            <person name="Monteiro-Vitorello C.B."/>
            <person name="Van Sluys M.A."/>
            <person name="Almeida N.F. Jr."/>
            <person name="Alves L.M.C."/>
            <person name="do Amaral A.M."/>
            <person name="Bertolini M.C."/>
            <person name="Camargo L.E.A."/>
            <person name="Camarotte G."/>
            <person name="Cannavan F."/>
            <person name="Cardozo J."/>
            <person name="Chambergo F."/>
            <person name="Ciapina L.P."/>
            <person name="Cicarelli R.M.B."/>
            <person name="Coutinho L.L."/>
            <person name="Cursino-Santos J.R."/>
            <person name="El-Dorry H."/>
            <person name="Faria J.B."/>
            <person name="Ferreira A.J.S."/>
            <person name="Ferreira R.C.C."/>
            <person name="Ferro M.I.T."/>
            <person name="Formighieri E.F."/>
            <person name="Franco M.C."/>
            <person name="Greggio C.C."/>
            <person name="Gruber A."/>
            <person name="Katsuyama A.M."/>
            <person name="Kishi L.T."/>
            <person name="Leite R.P."/>
            <person name="Lemos E.G.M."/>
            <person name="Lemos M.V.F."/>
            <person name="Locali E.C."/>
            <person name="Machado M.A."/>
            <person name="Madeira A.M.B.N."/>
            <person name="Martinez-Rossi N.M."/>
            <person name="Martins E.C."/>
            <person name="Meidanis J."/>
            <person name="Menck C.F.M."/>
            <person name="Miyaki C.Y."/>
            <person name="Moon D.H."/>
            <person name="Moreira L.M."/>
            <person name="Novo M.T.M."/>
            <person name="Okura V.K."/>
            <person name="Oliveira M.C."/>
            <person name="Oliveira V.R."/>
            <person name="Pereira H.A."/>
            <person name="Rossi A."/>
            <person name="Sena J.A.D."/>
            <person name="Silva C."/>
            <person name="de Souza R.F."/>
            <person name="Spinola L.A.F."/>
            <person name="Takita M.A."/>
            <person name="Tamura R.E."/>
            <person name="Teixeira E.C."/>
            <person name="Tezza R.I.D."/>
            <person name="Trindade dos Santos M."/>
            <person name="Truffi D."/>
            <person name="Tsai S.M."/>
            <person name="White F.F."/>
            <person name="Setubal J.C."/>
            <person name="Kitajima J.P."/>
        </authorList>
    </citation>
    <scope>NUCLEOTIDE SEQUENCE [LARGE SCALE GENOMIC DNA]</scope>
    <source>
        <strain>306</strain>
    </source>
</reference>
<keyword id="KW-0143">Chaperone</keyword>
<keyword id="KW-0963">Cytoplasm</keyword>
<keyword id="KW-0653">Protein transport</keyword>
<keyword id="KW-0811">Translocation</keyword>
<keyword id="KW-0813">Transport</keyword>
<organism>
    <name type="scientific">Xanthomonas axonopodis pv. citri (strain 306)</name>
    <dbReference type="NCBI Taxonomy" id="190486"/>
    <lineage>
        <taxon>Bacteria</taxon>
        <taxon>Pseudomonadati</taxon>
        <taxon>Pseudomonadota</taxon>
        <taxon>Gammaproteobacteria</taxon>
        <taxon>Lysobacterales</taxon>
        <taxon>Lysobacteraceae</taxon>
        <taxon>Xanthomonas</taxon>
    </lineage>
</organism>